<comment type="function">
    <text evidence="3 4 5">Disease resistance (R) protein that induces localized, salicylic acid-dependent defenses (PubMed:11141561). Confers resistance to powdery mildew (e.g. Erysiphe cichoracearum UCSC1) (PubMed:11141561, PubMed:15155802, PubMed:17565954).</text>
</comment>
<comment type="interaction">
    <interactant intactId="EBI-2460628">
        <id>Q9C5Z6</id>
    </interactant>
    <interactant intactId="EBI-1633785">
        <id>P48349</id>
        <label>GRF6</label>
    </interactant>
    <organismsDiffer>false</organismsDiffer>
    <experiments>4</experiments>
</comment>
<comment type="subcellular location">
    <subcellularLocation>
        <location evidence="1">Membrane</location>
        <topology evidence="1">Single-pass membrane protein</topology>
    </subcellularLocation>
</comment>
<comment type="induction">
    <text evidence="4 6">Expressed in leaves after powdery mildew infection (e.g. Erysiphe cichoracearum UCSC1) (PubMed:15155802). Induced in seedlings by the beneficial symbiotic fungus Trichoderma atroviride (PubMed:22942755).</text>
</comment>
<comment type="miscellaneous">
    <text evidence="10 11">Ecotypes susceptible to Erysiphe cichoracearum, such as cv. Columbia, are lacking RPW8.1 and RPW8.2 but contain in place HR4.</text>
</comment>
<comment type="similarity">
    <text evidence="9">Belongs to the plant RPW8 protein family.</text>
</comment>
<comment type="caution">
    <text evidence="10">Not present in cv. Columbia. The sequence shown is from strain cv. Ms-0.</text>
</comment>
<feature type="chain" id="PRO_0000431676" description="Protein RESISTANCE TO POWDERY MILDEW 8.2">
    <location>
        <begin position="1"/>
        <end position="174"/>
    </location>
</feature>
<feature type="transmembrane region" description="Helical" evidence="1">
    <location>
        <begin position="7"/>
        <end position="23"/>
    </location>
</feature>
<feature type="domain" description="RPW8" evidence="2">
    <location>
        <begin position="1"/>
        <end position="153"/>
    </location>
</feature>
<feature type="coiled-coil region" evidence="1">
    <location>
        <begin position="68"/>
        <end position="145"/>
    </location>
</feature>
<keyword id="KW-0175">Coiled coil</keyword>
<keyword id="KW-0381">Hypersensitive response</keyword>
<keyword id="KW-0472">Membrane</keyword>
<keyword id="KW-0611">Plant defense</keyword>
<keyword id="KW-0812">Transmembrane</keyword>
<keyword id="KW-1133">Transmembrane helix</keyword>
<protein>
    <recommendedName>
        <fullName evidence="7">Protein RESISTANCE TO POWDERY MILDEW 8.2</fullName>
        <shortName evidence="8">AtRPW8.2</shortName>
    </recommendedName>
</protein>
<accession>Q9C5Z6</accession>
<sequence>MIAEVAAGGALGLALSVLHEAVKRAKDRSVTTRFILHRLEATIDSITPLVVQIDKFSEEMEDSTSRKVNKRLKLLLENAVSLVEENAELRRRNVRKKFRYMRDIKEFEAKLRWVVDVDVQVNQLADIKELKAKMSEISTKLDKIMPQPKFEIHIGWCSGKTNRAIRFTFCSDDS</sequence>
<dbReference type="EMBL" id="AF273059">
    <property type="protein sequence ID" value="AAK09267.1"/>
    <property type="molecule type" value="Genomic_DNA"/>
</dbReference>
<dbReference type="EMBL" id="FJ267621">
    <property type="protein sequence ID" value="ACJ72022.1"/>
    <property type="molecule type" value="Genomic_DNA"/>
</dbReference>
<dbReference type="SMR" id="Q9C5Z6"/>
<dbReference type="IntAct" id="Q9C5Z6">
    <property type="interactions" value="1"/>
</dbReference>
<dbReference type="ExpressionAtlas" id="Q9C5Z6">
    <property type="expression patterns" value="baseline and differential"/>
</dbReference>
<dbReference type="GO" id="GO:0016020">
    <property type="term" value="C:membrane"/>
    <property type="evidence" value="ECO:0007669"/>
    <property type="project" value="UniProtKB-SubCell"/>
</dbReference>
<dbReference type="GO" id="GO:0050832">
    <property type="term" value="P:defense response to fungus"/>
    <property type="evidence" value="ECO:0000314"/>
    <property type="project" value="UniProtKB"/>
</dbReference>
<dbReference type="GO" id="GO:0045087">
    <property type="term" value="P:innate immune response"/>
    <property type="evidence" value="ECO:0000314"/>
    <property type="project" value="UniProtKB"/>
</dbReference>
<dbReference type="GO" id="GO:0009626">
    <property type="term" value="P:plant-type hypersensitive response"/>
    <property type="evidence" value="ECO:0007669"/>
    <property type="project" value="UniProtKB-KW"/>
</dbReference>
<dbReference type="GO" id="GO:0009620">
    <property type="term" value="P:response to fungus"/>
    <property type="evidence" value="ECO:0000270"/>
    <property type="project" value="UniProtKB"/>
</dbReference>
<dbReference type="GO" id="GO:0009610">
    <property type="term" value="P:response to symbiotic fungus"/>
    <property type="evidence" value="ECO:0000270"/>
    <property type="project" value="UniProtKB"/>
</dbReference>
<dbReference type="InterPro" id="IPR008808">
    <property type="entry name" value="Powdery_mildew-R_dom"/>
</dbReference>
<dbReference type="Pfam" id="PF05659">
    <property type="entry name" value="RPW8"/>
    <property type="match status" value="1"/>
</dbReference>
<dbReference type="PROSITE" id="PS51153">
    <property type="entry name" value="RPW8"/>
    <property type="match status" value="1"/>
</dbReference>
<organism evidence="12">
    <name type="scientific">Arabidopsis thaliana</name>
    <name type="common">Mouse-ear cress</name>
    <dbReference type="NCBI Taxonomy" id="3702"/>
    <lineage>
        <taxon>Eukaryota</taxon>
        <taxon>Viridiplantae</taxon>
        <taxon>Streptophyta</taxon>
        <taxon>Embryophyta</taxon>
        <taxon>Tracheophyta</taxon>
        <taxon>Spermatophyta</taxon>
        <taxon>Magnoliopsida</taxon>
        <taxon>eudicotyledons</taxon>
        <taxon>Gunneridae</taxon>
        <taxon>Pentapetalae</taxon>
        <taxon>rosids</taxon>
        <taxon>malvids</taxon>
        <taxon>Brassicales</taxon>
        <taxon>Brassicaceae</taxon>
        <taxon>Camelineae</taxon>
        <taxon>Arabidopsis</taxon>
    </lineage>
</organism>
<gene>
    <name evidence="7" type="primary">RPW8.2</name>
</gene>
<proteinExistence type="evidence at protein level"/>
<reference key="1">
    <citation type="journal article" date="2001" name="Science">
        <title>Broad-spectrum mildew resistance in Arabidopsis thaliana mediated by RPW8.</title>
        <authorList>
            <person name="Xiao S."/>
            <person name="Ellwood S."/>
            <person name="Calis O."/>
            <person name="Patrick E."/>
            <person name="Li T."/>
            <person name="Coleman M."/>
            <person name="Turner J.G."/>
        </authorList>
    </citation>
    <scope>NUCLEOTIDE SEQUENCE [GENOMIC DNA]</scope>
    <scope>FUNCTION</scope>
    <scope>MISCELLANEOUS</scope>
    <scope>GENE FAMILY</scope>
    <scope>NOMENCLATURE</scope>
    <source>
        <strain>cv. Ms-0</strain>
    </source>
</reference>
<reference key="2">
    <citation type="journal article" date="2008" name="Mol. Ecol.">
        <title>Functional variation in a disease resistance gene in populations of Arabidopsis thaliana.</title>
        <authorList>
            <person name="Jorgensen T.H."/>
            <person name="Emerson B.C."/>
        </authorList>
    </citation>
    <scope>NUCLEOTIDE SEQUENCE [GENOMIC DNA]</scope>
    <scope>REVIEW ON GENETIC VARIATIONS</scope>
</reference>
<reference key="3">
    <citation type="journal article" date="2004" name="Mol. Biol. Evol.">
        <title>Origin and maintenance of a broad-spectrum disease resistance locus in Arabidopsis.</title>
        <authorList>
            <person name="Xiao S."/>
            <person name="Emerson B."/>
            <person name="Ratanasut K."/>
            <person name="Patrick E."/>
            <person name="O'Neill C."/>
            <person name="Bancroft I."/>
            <person name="Turner J.G."/>
        </authorList>
    </citation>
    <scope>FUNCTION</scope>
    <scope>MISCELLANEOUS</scope>
    <scope>CAUTION</scope>
    <scope>INDUCTION BY ERYSIPHE CICHORACEARUM</scope>
    <scope>GENE FAMILY</scope>
</reference>
<reference key="4">
    <citation type="journal article" date="2007" name="Genetics">
        <title>Intraspecific genetic variations, fitness cost and benefit of RPW8, a disease resistance locus in Arabidopsis thaliana.</title>
        <authorList>
            <person name="Orgil U."/>
            <person name="Araki H."/>
            <person name="Tangchaiburana S."/>
            <person name="Berkey R."/>
            <person name="Xiao S."/>
        </authorList>
    </citation>
    <scope>FUNCTION</scope>
</reference>
<reference key="5">
    <citation type="journal article" date="2012" name="Int. J. Mol. Sci.">
        <title>HR4 gene is induced in the Arabidopsis-trichoderma atroviride beneficial interaction.</title>
        <authorList>
            <person name="Saenz-Mata J."/>
            <person name="Jimenez-Bremont J.F."/>
        </authorList>
    </citation>
    <scope>INDUCTION BY BENEFICIAL MICROBES</scope>
    <source>
        <strain>cv. Ms-0</strain>
    </source>
</reference>
<name>RPW82_ARATH</name>
<evidence type="ECO:0000255" key="1"/>
<evidence type="ECO:0000255" key="2">
    <source>
        <dbReference type="PROSITE-ProRule" id="PRU00495"/>
    </source>
</evidence>
<evidence type="ECO:0000269" key="3">
    <source>
    </source>
</evidence>
<evidence type="ECO:0000269" key="4">
    <source>
    </source>
</evidence>
<evidence type="ECO:0000269" key="5">
    <source>
    </source>
</evidence>
<evidence type="ECO:0000269" key="6">
    <source>
    </source>
</evidence>
<evidence type="ECO:0000303" key="7">
    <source>
    </source>
</evidence>
<evidence type="ECO:0000303" key="8">
    <source>
    </source>
</evidence>
<evidence type="ECO:0000305" key="9"/>
<evidence type="ECO:0000305" key="10">
    <source>
    </source>
</evidence>
<evidence type="ECO:0000305" key="11">
    <source>
    </source>
</evidence>
<evidence type="ECO:0000312" key="12">
    <source>
        <dbReference type="EMBL" id="AAK09267.1"/>
    </source>
</evidence>